<keyword id="KW-0012">Acyltransferase</keyword>
<keyword id="KW-0998">Cell outer membrane</keyword>
<keyword id="KW-0449">Lipoprotein</keyword>
<keyword id="KW-0472">Membrane</keyword>
<keyword id="KW-0564">Palmitate</keyword>
<keyword id="KW-0732">Signal</keyword>
<keyword id="KW-0808">Transferase</keyword>
<dbReference type="EC" id="2.3.1.251" evidence="1"/>
<dbReference type="EMBL" id="CP002124">
    <property type="protein sequence ID" value="ADP11911.1"/>
    <property type="molecule type" value="Genomic_DNA"/>
</dbReference>
<dbReference type="RefSeq" id="WP_014543714.1">
    <property type="nucleotide sequence ID" value="NC_017445.1"/>
</dbReference>
<dbReference type="SMR" id="E3DK69"/>
<dbReference type="STRING" id="215689.EJP617_22300"/>
<dbReference type="KEGG" id="erj:EJP617_22300"/>
<dbReference type="PATRIC" id="fig|215689.3.peg.2375"/>
<dbReference type="HOGENOM" id="CLU_104099_0_0_6"/>
<dbReference type="GO" id="GO:0009279">
    <property type="term" value="C:cell outer membrane"/>
    <property type="evidence" value="ECO:0007669"/>
    <property type="project" value="UniProtKB-SubCell"/>
</dbReference>
<dbReference type="GO" id="GO:0016746">
    <property type="term" value="F:acyltransferase activity"/>
    <property type="evidence" value="ECO:0007669"/>
    <property type="project" value="UniProtKB-UniRule"/>
</dbReference>
<dbReference type="GO" id="GO:0009245">
    <property type="term" value="P:lipid A biosynthetic process"/>
    <property type="evidence" value="ECO:0007669"/>
    <property type="project" value="UniProtKB-UniRule"/>
</dbReference>
<dbReference type="FunFam" id="2.40.160.20:FF:000002">
    <property type="entry name" value="Lipid A palmitoyltransferase PagP"/>
    <property type="match status" value="1"/>
</dbReference>
<dbReference type="Gene3D" id="2.40.160.20">
    <property type="match status" value="1"/>
</dbReference>
<dbReference type="HAMAP" id="MF_00837">
    <property type="entry name" value="PagP_transferase"/>
    <property type="match status" value="1"/>
</dbReference>
<dbReference type="InterPro" id="IPR009746">
    <property type="entry name" value="LipidA_acyl_PagP"/>
</dbReference>
<dbReference type="InterPro" id="IPR011250">
    <property type="entry name" value="OMP/PagP_b-brl"/>
</dbReference>
<dbReference type="NCBIfam" id="NF008271">
    <property type="entry name" value="PRK11045.1"/>
    <property type="match status" value="1"/>
</dbReference>
<dbReference type="Pfam" id="PF07017">
    <property type="entry name" value="PagP"/>
    <property type="match status" value="1"/>
</dbReference>
<dbReference type="SUPFAM" id="SSF56925">
    <property type="entry name" value="OMPA-like"/>
    <property type="match status" value="1"/>
</dbReference>
<dbReference type="PROSITE" id="PS51257">
    <property type="entry name" value="PROKAR_LIPOPROTEIN"/>
    <property type="match status" value="1"/>
</dbReference>
<reference key="1">
    <citation type="journal article" date="2011" name="J. Bacteriol.">
        <title>Complete genome sequence of Japanese Erwinia strain Ejp617, a bacterial shoot blight pathogen of pear.</title>
        <authorList>
            <person name="Park D.H."/>
            <person name="Thapa S.P."/>
            <person name="Choi B.S."/>
            <person name="Kim W.S."/>
            <person name="Hur J.H."/>
            <person name="Cho J.M."/>
            <person name="Lim J.S."/>
            <person name="Choi I.Y."/>
            <person name="Lim C.K."/>
        </authorList>
    </citation>
    <scope>NUCLEOTIDE SEQUENCE [LARGE SCALE GENOMIC DNA]</scope>
    <source>
        <strain>Ejp617</strain>
    </source>
</reference>
<comment type="function">
    <text evidence="1">Transfers a fatty acid residue from the sn-1 position of a phospholipid to the N-linked hydroxyfatty acid chain on the proximal unit of lipid A or its precursors.</text>
</comment>
<comment type="catalytic activity">
    <reaction evidence="1">
        <text>a lipid A + a 1,2-diacyl-sn-glycero-3-phosphocholine = a hepta-acyl lipid A + a 2-acyl-sn-glycero-3-phosphocholine</text>
        <dbReference type="Rhea" id="RHEA:74275"/>
        <dbReference type="ChEBI" id="CHEBI:57643"/>
        <dbReference type="ChEBI" id="CHEBI:57875"/>
        <dbReference type="ChEBI" id="CHEBI:193141"/>
        <dbReference type="ChEBI" id="CHEBI:193142"/>
        <dbReference type="EC" id="2.3.1.251"/>
    </reaction>
</comment>
<comment type="catalytic activity">
    <reaction evidence="1">
        <text>a lipid IVA + a 1,2-diacyl-sn-glycero-3-phosphocholine = a lipid IVB + a 2-acyl-sn-glycero-3-phosphocholine</text>
        <dbReference type="Rhea" id="RHEA:74279"/>
        <dbReference type="ChEBI" id="CHEBI:57643"/>
        <dbReference type="ChEBI" id="CHEBI:57875"/>
        <dbReference type="ChEBI" id="CHEBI:176425"/>
        <dbReference type="ChEBI" id="CHEBI:193143"/>
        <dbReference type="EC" id="2.3.1.251"/>
    </reaction>
</comment>
<comment type="catalytic activity">
    <reaction evidence="1">
        <text>a lipid IIA + a 1,2-diacyl-sn-glycero-3-phosphocholine = a lipid IIB + a 2-acyl-sn-glycero-3-phosphocholine</text>
        <dbReference type="Rhea" id="RHEA:74283"/>
        <dbReference type="ChEBI" id="CHEBI:57643"/>
        <dbReference type="ChEBI" id="CHEBI:57875"/>
        <dbReference type="ChEBI" id="CHEBI:193144"/>
        <dbReference type="ChEBI" id="CHEBI:193145"/>
        <dbReference type="EC" id="2.3.1.251"/>
    </reaction>
</comment>
<comment type="subunit">
    <text evidence="1">Homodimer.</text>
</comment>
<comment type="subcellular location">
    <subcellularLocation>
        <location evidence="1">Cell outer membrane</location>
        <topology evidence="1">Lipid-anchor</topology>
    </subcellularLocation>
</comment>
<comment type="similarity">
    <text evidence="1">Belongs to the lipid A palmitoyltransferase family.</text>
</comment>
<organism>
    <name type="scientific">Erwinia sp. (strain Ejp617)</name>
    <dbReference type="NCBI Taxonomy" id="215689"/>
    <lineage>
        <taxon>Bacteria</taxon>
        <taxon>Pseudomonadati</taxon>
        <taxon>Pseudomonadota</taxon>
        <taxon>Gammaproteobacteria</taxon>
        <taxon>Enterobacterales</taxon>
        <taxon>Erwiniaceae</taxon>
        <taxon>Erwinia</taxon>
    </lineage>
</organism>
<gene>
    <name evidence="1" type="primary">pagP</name>
    <name type="ordered locus">EJP617_22300</name>
</gene>
<accession>E3DK69</accession>
<name>PAGP_ERWSE</name>
<evidence type="ECO:0000255" key="1">
    <source>
        <dbReference type="HAMAP-Rule" id="MF_00837"/>
    </source>
</evidence>
<sequence>MKLKPVLYLLMLLGCLGLKSAHAATLAHGISASWHSFSQKWNEPQTFDPYIPSIIWHNRWTYDADKIDKYNERPWGAGGGVSHFDKKGNWNGIYLMAFKDSFNKWELISGYGWEKTWRPLSDPDFHLGLGYTAGVTMRDNWSYIPIPVLLPLASIGYEYVSFQMTYIPGTYNNGNVYFAWLRWQL</sequence>
<proteinExistence type="inferred from homology"/>
<feature type="signal peptide" evidence="1">
    <location>
        <begin position="1"/>
        <end position="14"/>
    </location>
</feature>
<feature type="chain" id="PRO_0000414447" description="Lipid A acyltransferase PagP">
    <location>
        <begin position="15"/>
        <end position="185"/>
    </location>
</feature>
<feature type="active site" evidence="1">
    <location>
        <position position="57"/>
    </location>
</feature>
<feature type="active site" evidence="1">
    <location>
        <position position="100"/>
    </location>
</feature>
<feature type="active site" evidence="1">
    <location>
        <position position="101"/>
    </location>
</feature>
<feature type="site" description="Role in lipopolysaccharide recognition" evidence="1">
    <location>
        <position position="66"/>
    </location>
</feature>
<feature type="site" description="Role in the phospholipid gating" evidence="1">
    <location>
        <position position="171"/>
    </location>
</feature>
<feature type="lipid moiety-binding region" description="N-palmitoyl cysteine" evidence="1">
    <location>
        <position position="15"/>
    </location>
</feature>
<feature type="lipid moiety-binding region" description="S-diacylglycerol cysteine" evidence="1">
    <location>
        <position position="15"/>
    </location>
</feature>
<protein>
    <recommendedName>
        <fullName evidence="1">Lipid A acyltransferase PagP</fullName>
        <ecNumber evidence="1">2.3.1.251</ecNumber>
    </recommendedName>
    <alternativeName>
        <fullName evidence="1">Lipid A acylation protein</fullName>
    </alternativeName>
</protein>